<evidence type="ECO:0000255" key="1"/>
<evidence type="ECO:0000269" key="2">
    <source>
    </source>
</evidence>
<evidence type="ECO:0000269" key="3">
    <source>
    </source>
</evidence>
<evidence type="ECO:0000305" key="4"/>
<evidence type="ECO:0000312" key="5">
    <source>
        <dbReference type="WormBase" id="F37C12.2"/>
    </source>
</evidence>
<keyword id="KW-0072">Autophagy</keyword>
<keyword id="KW-0963">Cytoplasm</keyword>
<keyword id="KW-0472">Membrane</keyword>
<keyword id="KW-1185">Reference proteome</keyword>
<keyword id="KW-0812">Transmembrane</keyword>
<keyword id="KW-1133">Transmembrane helix</keyword>
<organism>
    <name type="scientific">Caenorhabditis elegans</name>
    <dbReference type="NCBI Taxonomy" id="6239"/>
    <lineage>
        <taxon>Eukaryota</taxon>
        <taxon>Metazoa</taxon>
        <taxon>Ecdysozoa</taxon>
        <taxon>Nematoda</taxon>
        <taxon>Chromadorea</taxon>
        <taxon>Rhabditida</taxon>
        <taxon>Rhabditina</taxon>
        <taxon>Rhabditomorpha</taxon>
        <taxon>Rhabditoidea</taxon>
        <taxon>Rhabditidae</taxon>
        <taxon>Peloderinae</taxon>
        <taxon>Caenorhabditis</taxon>
    </lineage>
</organism>
<proteinExistence type="evidence at transcript level"/>
<name>EI24_CAEEL</name>
<protein>
    <recommendedName>
        <fullName>Ectopic P granules protein 4</fullName>
    </recommendedName>
</protein>
<comment type="function">
    <text evidence="2 3">Involved in autophagy (PubMed:20550938, PubMed:24374177). Thought to act in autophagasome and omegasome formation (PubMed:20550938).</text>
</comment>
<comment type="subcellular location">
    <subcellularLocation>
        <location evidence="2">Cytoplasm</location>
    </subcellularLocation>
    <subcellularLocation>
        <location evidence="1">Membrane</location>
        <topology evidence="1">Multi-pass membrane protein</topology>
    </subcellularLocation>
    <text>Forms a reticular pattern throughout the cytoplasm.</text>
</comment>
<comment type="tissue specificity">
    <text evidence="2">Expressed in pharyngeal and body wall muscles and intestine cells.</text>
</comment>
<comment type="developmental stage">
    <text evidence="2">Ubiquitously expressed during embrygogenesis.</text>
</comment>
<comment type="disruption phenotype">
    <text evidence="2 3">Early autophagic structures and lgg-1 puncta form an irregular shape and clump together (PubMed:20550938). RNAi-mediated knockdown results in increased lgg-2-positive autophagosomes following fertilization and at later embryonic stages (PubMed:24374177).</text>
</comment>
<comment type="similarity">
    <text evidence="4">Belongs to the EI24 family.</text>
</comment>
<accession>Q20123</accession>
<dbReference type="EMBL" id="FO081316">
    <property type="protein sequence ID" value="CCD70735.1"/>
    <property type="molecule type" value="Genomic_DNA"/>
</dbReference>
<dbReference type="PIR" id="T28836">
    <property type="entry name" value="T28836"/>
</dbReference>
<dbReference type="RefSeq" id="NP_001379933.1">
    <property type="nucleotide sequence ID" value="NM_001392138.1"/>
</dbReference>
<dbReference type="RefSeq" id="NP_498575.1">
    <property type="nucleotide sequence ID" value="NM_066174.4"/>
</dbReference>
<dbReference type="BioGRID" id="41221">
    <property type="interactions" value="1"/>
</dbReference>
<dbReference type="FunCoup" id="Q20123">
    <property type="interactions" value="1807"/>
</dbReference>
<dbReference type="STRING" id="6239.F37C12.2.2"/>
<dbReference type="PaxDb" id="6239-F37C12.2.3"/>
<dbReference type="PeptideAtlas" id="Q20123"/>
<dbReference type="EnsemblMetazoa" id="F37C12.2.1">
    <property type="protein sequence ID" value="F37C12.2.1"/>
    <property type="gene ID" value="WBGene00018150"/>
</dbReference>
<dbReference type="EnsemblMetazoa" id="F37C12.2.2">
    <property type="protein sequence ID" value="F37C12.2.2"/>
    <property type="gene ID" value="WBGene00018150"/>
</dbReference>
<dbReference type="EnsemblMetazoa" id="F37C12.2.3">
    <property type="protein sequence ID" value="F37C12.2.3"/>
    <property type="gene ID" value="WBGene00018150"/>
</dbReference>
<dbReference type="GeneID" id="176009"/>
<dbReference type="UCSC" id="F37C12.2">
    <property type="organism name" value="c. elegans"/>
</dbReference>
<dbReference type="AGR" id="WB:WBGene00018150"/>
<dbReference type="WormBase" id="F37C12.2">
    <property type="protein sequence ID" value="CE00741"/>
    <property type="gene ID" value="WBGene00018150"/>
    <property type="gene designation" value="epg-4"/>
</dbReference>
<dbReference type="eggNOG" id="KOG3966">
    <property type="taxonomic scope" value="Eukaryota"/>
</dbReference>
<dbReference type="GeneTree" id="ENSGT00390000018633"/>
<dbReference type="HOGENOM" id="CLU_883479_0_0_1"/>
<dbReference type="InParanoid" id="Q20123"/>
<dbReference type="OMA" id="TVMQQRR"/>
<dbReference type="OrthoDB" id="266518at2759"/>
<dbReference type="PhylomeDB" id="Q20123"/>
<dbReference type="PRO" id="PR:Q20123"/>
<dbReference type="Proteomes" id="UP000001940">
    <property type="component" value="Chromosome III"/>
</dbReference>
<dbReference type="Bgee" id="WBGene00018150">
    <property type="expression patterns" value="Expressed in adult organism and 4 other cell types or tissues"/>
</dbReference>
<dbReference type="GO" id="GO:0005783">
    <property type="term" value="C:endoplasmic reticulum"/>
    <property type="evidence" value="ECO:0000314"/>
    <property type="project" value="WormBase"/>
</dbReference>
<dbReference type="GO" id="GO:0016020">
    <property type="term" value="C:membrane"/>
    <property type="evidence" value="ECO:0007669"/>
    <property type="project" value="UniProtKB-SubCell"/>
</dbReference>
<dbReference type="GO" id="GO:0016236">
    <property type="term" value="P:macroautophagy"/>
    <property type="evidence" value="ECO:0000315"/>
    <property type="project" value="WormBase"/>
</dbReference>
<dbReference type="GO" id="GO:1902902">
    <property type="term" value="P:negative regulation of autophagosome assembly"/>
    <property type="evidence" value="ECO:0000315"/>
    <property type="project" value="UniProtKB"/>
</dbReference>
<dbReference type="PANTHER" id="PTHR21389:SF0">
    <property type="entry name" value="ETOPOSIDE-INDUCED PROTEIN 2.4 HOMOLOG"/>
    <property type="match status" value="1"/>
</dbReference>
<dbReference type="PANTHER" id="PTHR21389">
    <property type="entry name" value="P53 INDUCED PROTEIN"/>
    <property type="match status" value="1"/>
</dbReference>
<dbReference type="Pfam" id="PF07264">
    <property type="entry name" value="EI24"/>
    <property type="match status" value="1"/>
</dbReference>
<feature type="chain" id="PRO_0000404705" description="Ectopic P granules protein 4">
    <location>
        <begin position="1"/>
        <end position="315"/>
    </location>
</feature>
<feature type="transmembrane region" description="Helical" evidence="1">
    <location>
        <begin position="84"/>
        <end position="104"/>
    </location>
</feature>
<feature type="transmembrane region" description="Helical" evidence="1">
    <location>
        <begin position="113"/>
        <end position="133"/>
    </location>
</feature>
<feature type="transmembrane region" description="Helical" evidence="1">
    <location>
        <begin position="146"/>
        <end position="166"/>
    </location>
</feature>
<feature type="transmembrane region" description="Helical" evidence="1">
    <location>
        <begin position="190"/>
        <end position="210"/>
    </location>
</feature>
<feature type="transmembrane region" description="Helical" evidence="1">
    <location>
        <begin position="221"/>
        <end position="241"/>
    </location>
</feature>
<feature type="transmembrane region" description="Helical" evidence="1">
    <location>
        <begin position="242"/>
        <end position="262"/>
    </location>
</feature>
<gene>
    <name evidence="5" type="primary">epg-4</name>
    <name evidence="5" type="synonym">eip-24</name>
    <name type="ORF">F37C12.2</name>
</gene>
<reference key="1">
    <citation type="journal article" date="1998" name="Science">
        <title>Genome sequence of the nematode C. elegans: a platform for investigating biology.</title>
        <authorList>
            <consortium name="The C. elegans sequencing consortium"/>
        </authorList>
    </citation>
    <scope>NUCLEOTIDE SEQUENCE [LARGE SCALE GENOMIC DNA]</scope>
    <source>
        <strain>Bristol N2</strain>
    </source>
</reference>
<reference evidence="4" key="2">
    <citation type="journal article" date="2010" name="Cell">
        <title>C. elegans screen identifies autophagy genes specific to multicellular organisms.</title>
        <authorList>
            <person name="Tian Y."/>
            <person name="Li Z."/>
            <person name="Hu W."/>
            <person name="Ren H."/>
            <person name="Tian E."/>
            <person name="Zhao Y."/>
            <person name="Lu Q."/>
            <person name="Huang X."/>
            <person name="Yang P."/>
            <person name="Li X."/>
            <person name="Wang X."/>
            <person name="Kovacs A.L."/>
            <person name="Yu L."/>
            <person name="Zhang H."/>
        </authorList>
    </citation>
    <scope>FUNCTION</scope>
    <scope>SUBCELLULAR LOCATION</scope>
    <scope>TISSUE SPECIFICITY</scope>
    <scope>DEVELOPMENTAL STAGE</scope>
    <scope>DISRUPTION PHENOTYPE</scope>
</reference>
<reference key="3">
    <citation type="journal article" date="2014" name="Dev. Cell">
        <title>The C. elegans LC3 acts downstream of GABARAP to degrade autophagosomes by interacting with the HOPS subunit VPS39.</title>
        <authorList>
            <person name="Manil-Segalen M."/>
            <person name="Lefebvre C."/>
            <person name="Jenzer C."/>
            <person name="Trichet M."/>
            <person name="Boulogne C."/>
            <person name="Satiat-Jeunemaitre B."/>
            <person name="Legouis R."/>
        </authorList>
    </citation>
    <scope>FUNCTION</scope>
    <scope>DISRUPTION PHENOTYPE</scope>
</reference>
<sequence length="315" mass="36559">MVKFQIIARDFYHGFIDSFKGITFVRRIREEEAKEVKVEPPKPVERTVLMMRREKQGIFKRPPEPPKKKDSFLKKLWQIYAMNIGFLVLWQVCILILGLFFSFFDRTDLGHNIGYILIIPIFFASRIIQALWFSDISGACMRALKLPPPPVVPFSSMLAGTLISALHQIFFLIQGMLSQYLPIPLITPVIVYLHMALLNSMYCFDYFFDGYNLSFLRRKDIFESHWPYFLGFGTPLALACSISSNMFVNSVIFALLFPFFIITSYPANWNRKYEEEIPKIAFCRISYMFTELVGKFVKSITPTNNPTAARNNAQN</sequence>